<protein>
    <recommendedName>
        <fullName>Streptokinase C</fullName>
    </recommendedName>
</protein>
<sequence length="440" mass="50140">MKNYLSFGMFALLFALTFGTVNSVQAIAGPEWLLDRPSVNNSQLVVSVAGTVEGTNQDISLKFFEIDLTSRPAHGGKTEQGLSPKSKPFATDSGAMSHKLEKADLLKAIQEQLIANVHSNDDYFEVIDFASDATITDRNGKVYFADKDGSVTLPTQPVQEFLLSGHVRVRPYKEKPIQNQAKSVDVEYTVQFTPLNPDDDFRPGLKDTKLLKTLAIGDTITSQELLAQAQSILNKNHPGYTIYERDSSIVTHDNDIFRTILPMDQEFTYRVKNREQAYRINKKSGLNEEINNTDLISEKYYVLKKGEKPYDPFDRSHLKLFTIKYVDVDTNELLKSEQLLTASERNLDFRDLYDPRDKAKLLYNNLDAFGIMDYTLTGKVEDNHDDTNRIITVYMGKRPEGENASYHLAYDKDRYTEEEREVYSYLRYTGTPIPDNPNDK</sequence>
<gene>
    <name type="primary">skc</name>
</gene>
<comment type="function">
    <text>This protein is not a protease, but it activates plasminogen by complexing with it. As a potential virulence factor, it is thought to prevent the formation of effective fibrin barriers around the site of infection, thereby contributing to the invasiveness of the cells.</text>
</comment>
<comment type="interaction">
    <interactant intactId="EBI-1035089">
        <id>P00779</id>
    </interactant>
    <interactant intactId="EBI-999394">
        <id>P00747</id>
        <label>PLG</label>
    </interactant>
    <organismsDiffer>true</organismsDiffer>
    <experiments>2</experiments>
</comment>
<keyword id="KW-0002">3D-structure</keyword>
<keyword id="KW-0903">Direct protein sequencing</keyword>
<keyword id="KW-0617">Plasminogen activation</keyword>
<keyword id="KW-0732">Signal</keyword>
<keyword id="KW-0843">Virulence</keyword>
<name>STRP_STREQ</name>
<feature type="signal peptide" evidence="1">
    <location>
        <begin position="1"/>
        <end position="26"/>
    </location>
</feature>
<feature type="chain" id="PRO_0000022428" description="Streptokinase C">
    <location>
        <begin position="27"/>
        <end position="440"/>
    </location>
</feature>
<feature type="sequence variant">
    <original>L</original>
    <variation>D</variation>
    <location>
        <position position="195"/>
    </location>
</feature>
<feature type="sequence variant">
    <original>D</original>
    <variation>L</variation>
    <location>
        <position position="207"/>
    </location>
</feature>
<feature type="sequence conflict" description="In Ref. 2; AA sequence." evidence="2" ref="2">
    <original>EKY</original>
    <variation>LEYK</variation>
    <location>
        <begin position="298"/>
        <end position="300"/>
    </location>
</feature>
<feature type="sequence conflict" description="In Ref. 2; AA sequence." evidence="2" ref="2">
    <original>N</original>
    <variation>D</variation>
    <location>
        <position position="438"/>
    </location>
</feature>
<feature type="helix" evidence="5">
    <location>
        <begin position="33"/>
        <end position="35"/>
    </location>
</feature>
<feature type="strand" evidence="4">
    <location>
        <begin position="43"/>
        <end position="52"/>
    </location>
</feature>
<feature type="turn" evidence="5">
    <location>
        <begin position="53"/>
        <end position="55"/>
    </location>
</feature>
<feature type="strand" evidence="5">
    <location>
        <begin position="58"/>
        <end position="60"/>
    </location>
</feature>
<feature type="strand" evidence="4">
    <location>
        <begin position="64"/>
        <end position="70"/>
    </location>
</feature>
<feature type="strand" evidence="4">
    <location>
        <begin position="96"/>
        <end position="101"/>
    </location>
</feature>
<feature type="helix" evidence="4">
    <location>
        <begin position="102"/>
        <end position="115"/>
    </location>
</feature>
<feature type="strand" evidence="4">
    <location>
        <begin position="119"/>
        <end position="121"/>
    </location>
</feature>
<feature type="strand" evidence="4">
    <location>
        <begin position="124"/>
        <end position="129"/>
    </location>
</feature>
<feature type="strand" evidence="4">
    <location>
        <begin position="134"/>
        <end position="137"/>
    </location>
</feature>
<feature type="strand" evidence="4">
    <location>
        <begin position="149"/>
        <end position="152"/>
    </location>
</feature>
<feature type="strand" evidence="4">
    <location>
        <begin position="155"/>
        <end position="157"/>
    </location>
</feature>
<feature type="strand" evidence="4">
    <location>
        <begin position="160"/>
        <end position="171"/>
    </location>
</feature>
<feature type="strand" evidence="3">
    <location>
        <begin position="178"/>
        <end position="180"/>
    </location>
</feature>
<feature type="strand" evidence="6">
    <location>
        <begin position="184"/>
        <end position="196"/>
    </location>
</feature>
<feature type="strand" evidence="6">
    <location>
        <begin position="209"/>
        <end position="214"/>
    </location>
</feature>
<feature type="strand" evidence="6">
    <location>
        <begin position="219"/>
        <end position="221"/>
    </location>
</feature>
<feature type="helix" evidence="6">
    <location>
        <begin position="222"/>
        <end position="236"/>
    </location>
</feature>
<feature type="strand" evidence="6">
    <location>
        <begin position="240"/>
        <end position="252"/>
    </location>
</feature>
<feature type="strand" evidence="6">
    <location>
        <begin position="263"/>
        <end position="265"/>
    </location>
</feature>
<feature type="strand" evidence="6">
    <location>
        <begin position="268"/>
        <end position="270"/>
    </location>
</feature>
<feature type="strand" evidence="6">
    <location>
        <begin position="278"/>
        <end position="280"/>
    </location>
</feature>
<feature type="turn" evidence="6">
    <location>
        <begin position="282"/>
        <end position="284"/>
    </location>
</feature>
<feature type="strand" evidence="6">
    <location>
        <begin position="287"/>
        <end position="289"/>
    </location>
</feature>
<feature type="strand" evidence="6">
    <location>
        <begin position="292"/>
        <end position="304"/>
    </location>
</feature>
<feature type="strand" evidence="6">
    <location>
        <begin position="310"/>
        <end position="312"/>
    </location>
</feature>
<feature type="strand" evidence="3">
    <location>
        <begin position="316"/>
        <end position="327"/>
    </location>
</feature>
<feature type="turn" evidence="3">
    <location>
        <begin position="328"/>
        <end position="330"/>
    </location>
</feature>
<feature type="strand" evidence="3">
    <location>
        <begin position="333"/>
        <end position="342"/>
    </location>
</feature>
<feature type="helix" evidence="3">
    <location>
        <begin position="344"/>
        <end position="346"/>
    </location>
</feature>
<feature type="turn" evidence="3">
    <location>
        <begin position="355"/>
        <end position="358"/>
    </location>
</feature>
<feature type="helix" evidence="3">
    <location>
        <begin position="367"/>
        <end position="369"/>
    </location>
</feature>
<feature type="strand" evidence="3">
    <location>
        <begin position="373"/>
        <end position="382"/>
    </location>
</feature>
<feature type="strand" evidence="3">
    <location>
        <begin position="386"/>
        <end position="397"/>
    </location>
</feature>
<organism>
    <name type="scientific">Streptococcus dysgalactiae subsp. equisimilis</name>
    <name type="common">Streptococcus equisimilis</name>
    <dbReference type="NCBI Taxonomy" id="119602"/>
    <lineage>
        <taxon>Bacteria</taxon>
        <taxon>Bacillati</taxon>
        <taxon>Bacillota</taxon>
        <taxon>Bacilli</taxon>
        <taxon>Lactobacillales</taxon>
        <taxon>Streptococcaceae</taxon>
        <taxon>Streptococcus</taxon>
    </lineage>
</organism>
<dbReference type="EMBL" id="K02986">
    <property type="protein sequence ID" value="AAA26974.1"/>
    <property type="molecule type" value="Genomic_DNA"/>
</dbReference>
<dbReference type="EMBL" id="X72832">
    <property type="protein sequence ID" value="CAA51351.1"/>
    <property type="molecule type" value="Genomic_DNA"/>
</dbReference>
<dbReference type="PIR" id="A00967">
    <property type="entry name" value="BZSO"/>
</dbReference>
<dbReference type="PIR" id="A22801">
    <property type="entry name" value="A22801"/>
</dbReference>
<dbReference type="RefSeq" id="WP_138098186.1">
    <property type="nucleotide sequence ID" value="NZ_CBCRYK010000002.1"/>
</dbReference>
<dbReference type="PDB" id="1BML">
    <property type="method" value="X-ray"/>
    <property type="resolution" value="2.90 A"/>
    <property type="chains" value="C/D=38-398"/>
</dbReference>
<dbReference type="PDB" id="1L4D">
    <property type="method" value="X-ray"/>
    <property type="resolution" value="2.30 A"/>
    <property type="chains" value="B=40-173"/>
</dbReference>
<dbReference type="PDB" id="1L4Z">
    <property type="method" value="X-ray"/>
    <property type="resolution" value="2.80 A"/>
    <property type="chains" value="B=27-173"/>
</dbReference>
<dbReference type="PDB" id="1QQR">
    <property type="method" value="X-ray"/>
    <property type="resolution" value="2.30 A"/>
    <property type="chains" value="A/B/C/D=177-314"/>
</dbReference>
<dbReference type="PDBsum" id="1BML"/>
<dbReference type="PDBsum" id="1L4D"/>
<dbReference type="PDBsum" id="1L4Z"/>
<dbReference type="PDBsum" id="1QQR"/>
<dbReference type="SMR" id="P00779"/>
<dbReference type="IntAct" id="P00779">
    <property type="interactions" value="1"/>
</dbReference>
<dbReference type="EvolutionaryTrace" id="P00779"/>
<dbReference type="GO" id="GO:0005576">
    <property type="term" value="C:extracellular region"/>
    <property type="evidence" value="ECO:0007669"/>
    <property type="project" value="InterPro"/>
</dbReference>
<dbReference type="Gene3D" id="3.10.20.150">
    <property type="match status" value="1"/>
</dbReference>
<dbReference type="Gene3D" id="3.10.20.180">
    <property type="match status" value="2"/>
</dbReference>
<dbReference type="InterPro" id="IPR004093">
    <property type="entry name" value="SAK"/>
</dbReference>
<dbReference type="InterPro" id="IPR036120">
    <property type="entry name" value="SAK/SK_sf"/>
</dbReference>
<dbReference type="InterPro" id="IPR008124">
    <property type="entry name" value="SK"/>
</dbReference>
<dbReference type="Pfam" id="PF02821">
    <property type="entry name" value="Staphylokinase"/>
    <property type="match status" value="2"/>
</dbReference>
<dbReference type="PRINTS" id="PR01753">
    <property type="entry name" value="STREPKINASE"/>
</dbReference>
<dbReference type="SUPFAM" id="SSF54328">
    <property type="entry name" value="Staphylokinase/streptokinase"/>
    <property type="match status" value="3"/>
</dbReference>
<proteinExistence type="evidence at protein level"/>
<reference key="1">
    <citation type="journal article" date="1985" name="Gene">
        <title>Nucleotide sequence of the streptokinase gene from Streptococcus equisimilis H46A.</title>
        <authorList>
            <person name="Malke H."/>
            <person name="Roe B.A."/>
            <person name="Ferretti J.J."/>
        </authorList>
    </citation>
    <scope>NUCLEOTIDE SEQUENCE [GENOMIC DNA]</scope>
    <source>
        <strain>H46A</strain>
    </source>
</reference>
<reference key="2">
    <citation type="journal article" date="1982" name="Biochemistry">
        <title>Complete amino acid sequence of streptokinase and its homology with serine proteases.</title>
        <authorList>
            <person name="Jackson K.W."/>
            <person name="Tang J."/>
        </authorList>
    </citation>
    <scope>PROTEIN SEQUENCE OF 27-440</scope>
</reference>
<evidence type="ECO:0000269" key="1">
    <source>
    </source>
</evidence>
<evidence type="ECO:0000305" key="2"/>
<evidence type="ECO:0007829" key="3">
    <source>
        <dbReference type="PDB" id="1BML"/>
    </source>
</evidence>
<evidence type="ECO:0007829" key="4">
    <source>
        <dbReference type="PDB" id="1L4D"/>
    </source>
</evidence>
<evidence type="ECO:0007829" key="5">
    <source>
        <dbReference type="PDB" id="1L4Z"/>
    </source>
</evidence>
<evidence type="ECO:0007829" key="6">
    <source>
        <dbReference type="PDB" id="1QQR"/>
    </source>
</evidence>
<accession>P00779</accession>